<keyword id="KW-0488">Methylation</keyword>
<keyword id="KW-0687">Ribonucleoprotein</keyword>
<keyword id="KW-0689">Ribosomal protein</keyword>
<keyword id="KW-0694">RNA-binding</keyword>
<keyword id="KW-0699">rRNA-binding</keyword>
<keyword id="KW-0820">tRNA-binding</keyword>
<name>RS12_PROM9</name>
<organism>
    <name type="scientific">Prochlorococcus marinus (strain MIT 9312)</name>
    <dbReference type="NCBI Taxonomy" id="74546"/>
    <lineage>
        <taxon>Bacteria</taxon>
        <taxon>Bacillati</taxon>
        <taxon>Cyanobacteriota</taxon>
        <taxon>Cyanophyceae</taxon>
        <taxon>Synechococcales</taxon>
        <taxon>Prochlorococcaceae</taxon>
        <taxon>Prochlorococcus</taxon>
    </lineage>
</organism>
<proteinExistence type="inferred from homology"/>
<evidence type="ECO:0000250" key="1"/>
<evidence type="ECO:0000255" key="2">
    <source>
        <dbReference type="HAMAP-Rule" id="MF_00403"/>
    </source>
</evidence>
<evidence type="ECO:0000256" key="3">
    <source>
        <dbReference type="SAM" id="MobiDB-lite"/>
    </source>
</evidence>
<evidence type="ECO:0000305" key="4"/>
<gene>
    <name evidence="2" type="primary">rpsL</name>
    <name evidence="2" type="synonym">rps12</name>
    <name type="ordered locus">PMT9312_1603</name>
</gene>
<comment type="function">
    <text evidence="2">With S4 and S5 plays an important role in translational accuracy.</text>
</comment>
<comment type="function">
    <text evidence="2">Interacts with and stabilizes bases of the 16S rRNA that are involved in tRNA selection in the A site and with the mRNA backbone. Located at the interface of the 30S and 50S subunits, it traverses the body of the 30S subunit contacting proteins on the other side and probably holding the rRNA structure together. The combined cluster of proteins S8, S12 and S17 appears to hold together the shoulder and platform of the 30S subunit.</text>
</comment>
<comment type="subunit">
    <text evidence="2">Part of the 30S ribosomal subunit. Contacts proteins S8 and S17. May interact with IF1 in the 30S initiation complex.</text>
</comment>
<comment type="similarity">
    <text evidence="2">Belongs to the universal ribosomal protein uS12 family.</text>
</comment>
<reference key="1">
    <citation type="journal article" date="2006" name="Science">
        <title>Genomic islands and the ecology and evolution of Prochlorococcus.</title>
        <authorList>
            <person name="Coleman M.L."/>
            <person name="Sullivan M.B."/>
            <person name="Martiny A.C."/>
            <person name="Steglich C."/>
            <person name="Barry K."/>
            <person name="Delong E.F."/>
            <person name="Chisholm S.W."/>
        </authorList>
    </citation>
    <scope>NUCLEOTIDE SEQUENCE [LARGE SCALE GENOMIC DNA]</scope>
    <source>
        <strain>MIT 9312</strain>
    </source>
</reference>
<sequence>MPTISQLIGSERKRLTRKTKSPALKSCPERRGVCTRVYTSTPKKPNSALRKVARVRLTSGFEVTAYIPGIGHNLQEHSVVLLRGGRVKDLPGVRYHIIRGTLDTAGVKDRRQSRSKYGAKAPKD</sequence>
<dbReference type="EMBL" id="CP000111">
    <property type="protein sequence ID" value="ABB50663.1"/>
    <property type="molecule type" value="Genomic_DNA"/>
</dbReference>
<dbReference type="RefSeq" id="WP_011377145.1">
    <property type="nucleotide sequence ID" value="NC_007577.1"/>
</dbReference>
<dbReference type="SMR" id="Q318N2"/>
<dbReference type="STRING" id="74546.PMT9312_1603"/>
<dbReference type="KEGG" id="pmi:PMT9312_1603"/>
<dbReference type="eggNOG" id="COG0048">
    <property type="taxonomic scope" value="Bacteria"/>
</dbReference>
<dbReference type="HOGENOM" id="CLU_104295_1_2_3"/>
<dbReference type="OrthoDB" id="9802366at2"/>
<dbReference type="Proteomes" id="UP000002715">
    <property type="component" value="Chromosome"/>
</dbReference>
<dbReference type="GO" id="GO:0015935">
    <property type="term" value="C:small ribosomal subunit"/>
    <property type="evidence" value="ECO:0007669"/>
    <property type="project" value="InterPro"/>
</dbReference>
<dbReference type="GO" id="GO:0019843">
    <property type="term" value="F:rRNA binding"/>
    <property type="evidence" value="ECO:0007669"/>
    <property type="project" value="UniProtKB-UniRule"/>
</dbReference>
<dbReference type="GO" id="GO:0003735">
    <property type="term" value="F:structural constituent of ribosome"/>
    <property type="evidence" value="ECO:0007669"/>
    <property type="project" value="InterPro"/>
</dbReference>
<dbReference type="GO" id="GO:0000049">
    <property type="term" value="F:tRNA binding"/>
    <property type="evidence" value="ECO:0007669"/>
    <property type="project" value="UniProtKB-UniRule"/>
</dbReference>
<dbReference type="GO" id="GO:0006412">
    <property type="term" value="P:translation"/>
    <property type="evidence" value="ECO:0007669"/>
    <property type="project" value="UniProtKB-UniRule"/>
</dbReference>
<dbReference type="CDD" id="cd03368">
    <property type="entry name" value="Ribosomal_S12"/>
    <property type="match status" value="1"/>
</dbReference>
<dbReference type="FunFam" id="2.40.50.140:FF:000001">
    <property type="entry name" value="30S ribosomal protein S12"/>
    <property type="match status" value="1"/>
</dbReference>
<dbReference type="Gene3D" id="2.40.50.140">
    <property type="entry name" value="Nucleic acid-binding proteins"/>
    <property type="match status" value="1"/>
</dbReference>
<dbReference type="HAMAP" id="MF_00403_B">
    <property type="entry name" value="Ribosomal_uS12_B"/>
    <property type="match status" value="1"/>
</dbReference>
<dbReference type="InterPro" id="IPR012340">
    <property type="entry name" value="NA-bd_OB-fold"/>
</dbReference>
<dbReference type="InterPro" id="IPR006032">
    <property type="entry name" value="Ribosomal_uS12"/>
</dbReference>
<dbReference type="InterPro" id="IPR005679">
    <property type="entry name" value="Ribosomal_uS12_bac"/>
</dbReference>
<dbReference type="NCBIfam" id="TIGR00981">
    <property type="entry name" value="rpsL_bact"/>
    <property type="match status" value="1"/>
</dbReference>
<dbReference type="PANTHER" id="PTHR11652">
    <property type="entry name" value="30S RIBOSOMAL PROTEIN S12 FAMILY MEMBER"/>
    <property type="match status" value="1"/>
</dbReference>
<dbReference type="Pfam" id="PF00164">
    <property type="entry name" value="Ribosom_S12_S23"/>
    <property type="match status" value="1"/>
</dbReference>
<dbReference type="PIRSF" id="PIRSF002133">
    <property type="entry name" value="Ribosomal_S12/S23"/>
    <property type="match status" value="1"/>
</dbReference>
<dbReference type="PRINTS" id="PR01034">
    <property type="entry name" value="RIBOSOMALS12"/>
</dbReference>
<dbReference type="SUPFAM" id="SSF50249">
    <property type="entry name" value="Nucleic acid-binding proteins"/>
    <property type="match status" value="1"/>
</dbReference>
<dbReference type="PROSITE" id="PS00055">
    <property type="entry name" value="RIBOSOMAL_S12"/>
    <property type="match status" value="1"/>
</dbReference>
<feature type="chain" id="PRO_0000238140" description="Small ribosomal subunit protein uS12">
    <location>
        <begin position="1"/>
        <end position="124"/>
    </location>
</feature>
<feature type="region of interest" description="Disordered" evidence="3">
    <location>
        <begin position="1"/>
        <end position="28"/>
    </location>
</feature>
<feature type="region of interest" description="Disordered" evidence="3">
    <location>
        <begin position="104"/>
        <end position="124"/>
    </location>
</feature>
<feature type="modified residue" description="3-methylthioaspartic acid" evidence="1">
    <location>
        <position position="89"/>
    </location>
</feature>
<accession>Q318N2</accession>
<protein>
    <recommendedName>
        <fullName evidence="2">Small ribosomal subunit protein uS12</fullName>
    </recommendedName>
    <alternativeName>
        <fullName evidence="4">30S ribosomal protein S12</fullName>
    </alternativeName>
</protein>